<comment type="function">
    <text>Probable constituent of the synaptonemal complex during meiosis. May interact with RED1.</text>
</comment>
<comment type="interaction">
    <interactant intactId="EBI-3768303">
        <id>P20050</id>
    </interactant>
    <interactant intactId="EBI-14909">
        <id>P14291</id>
        <label>RED1</label>
    </interactant>
    <organismsDiffer>false</organismsDiffer>
    <experiments>3</experiments>
</comment>
<comment type="subcellular location">
    <subcellularLocation>
        <location>Nucleus</location>
    </subcellularLocation>
    <subcellularLocation>
        <location>Chromosome</location>
    </subcellularLocation>
    <text>Synapsis of meiotic chromosomes.</text>
</comment>
<comment type="developmental stage">
    <text>Meiosis-specific.</text>
</comment>
<evidence type="ECO:0000255" key="1">
    <source>
        <dbReference type="PROSITE-ProRule" id="PRU00109"/>
    </source>
</evidence>
<evidence type="ECO:0007829" key="2">
    <source>
        <dbReference type="PDB" id="8CWW"/>
    </source>
</evidence>
<proteinExistence type="evidence at protein level"/>
<sequence length="605" mass="68876">MSNKQLVKPKTETKTEITTEQSQKLLQTMLTMSFGCLAFLRGLFPDDIFVDQRFVPEKVEKNYNKQNTSQNNSIKIKTLIRGKSAQADLLLDWLEKGVFKSIRLKCLKALSLGIFLEDPTDLLENYIFSFDYDEENNVNINVNLSGNKKGSKNADPENETISLLDSRRMVQQLMRRFIIITQSLEPLPQKKFLTMRLMFNDNVDEDYQPELFKDATFDKRATLKVPTNLDNDAIDVGTLNTKHHKVALSVLSAATSSMEKAGNTNFIRVDPFDLILQQQEENKLEESVPTKPQNFVTSQTTNVLGNLLNSSQASIQPTQFVSNNPVTGICSCECGLEVPKAATVLKTCKSCRKTLHGICYGNFLHSSIEKCFTCIFGPSLDTKWSKFQDLMMIRKVFRFLVRKKKGFPASITELIDSFINVEDQNNEVKERVAFALFVFFLDETLCLDNGGKPSQTIRYVTSSVLVDVKGIVIPNTRKQLNVNHEYKWHFTTSSPKAESFYQEVLPNSRKQVESWLQDITNLRKVYSEALSPSSTLQELDLNSSLPTQDPIISGQKRRRYDLDEYLEEDKSSVVNDTIKAKDFDESVPAKIRKISVSKKTLKSNW</sequence>
<protein>
    <recommendedName>
        <fullName>Meiosis-specific protein HOP1</fullName>
    </recommendedName>
</protein>
<organism>
    <name type="scientific">Saccharomyces cerevisiae (strain ATCC 204508 / S288c)</name>
    <name type="common">Baker's yeast</name>
    <dbReference type="NCBI Taxonomy" id="559292"/>
    <lineage>
        <taxon>Eukaryota</taxon>
        <taxon>Fungi</taxon>
        <taxon>Dikarya</taxon>
        <taxon>Ascomycota</taxon>
        <taxon>Saccharomycotina</taxon>
        <taxon>Saccharomycetes</taxon>
        <taxon>Saccharomycetales</taxon>
        <taxon>Saccharomycetaceae</taxon>
        <taxon>Saccharomyces</taxon>
    </lineage>
</organism>
<reference key="1">
    <citation type="journal article" date="1990" name="Cell">
        <title>The HOP1 gene encodes a meiosis-specific component of yeast chromosomes.</title>
        <authorList>
            <person name="Hollingsworth N.M."/>
            <person name="Goetsch L."/>
            <person name="Byers B."/>
        </authorList>
    </citation>
    <scope>NUCLEOTIDE SEQUENCE [GENOMIC DNA]</scope>
    <source>
        <strain>7234</strain>
    </source>
</reference>
<reference key="2">
    <citation type="journal article" date="1993" name="Genetics">
        <title>A conditional allele of the Saccharomyces cerevisiae HOP1 gene is suppressed by overexpression of two other meiosis-specific genes: RED1 and REC104.</title>
        <authorList>
            <person name="Hollingsworth N.M."/>
            <person name="Johnson A.D."/>
        </authorList>
    </citation>
    <scope>SEQUENCE REVISION</scope>
</reference>
<reference key="3">
    <citation type="journal article" date="1997" name="Nature">
        <title>The nucleotide sequence of Saccharomyces cerevisiae chromosome IX.</title>
        <authorList>
            <person name="Churcher C.M."/>
            <person name="Bowman S."/>
            <person name="Badcock K."/>
            <person name="Bankier A.T."/>
            <person name="Brown D."/>
            <person name="Chillingworth T."/>
            <person name="Connor R."/>
            <person name="Devlin K."/>
            <person name="Gentles S."/>
            <person name="Hamlin N."/>
            <person name="Harris D.E."/>
            <person name="Horsnell T."/>
            <person name="Hunt S."/>
            <person name="Jagels K."/>
            <person name="Jones M."/>
            <person name="Lye G."/>
            <person name="Moule S."/>
            <person name="Odell C."/>
            <person name="Pearson D."/>
            <person name="Rajandream M.A."/>
            <person name="Rice P."/>
            <person name="Rowley N."/>
            <person name="Skelton J."/>
            <person name="Smith V."/>
            <person name="Walsh S.V."/>
            <person name="Whitehead S."/>
            <person name="Barrell B.G."/>
        </authorList>
    </citation>
    <scope>NUCLEOTIDE SEQUENCE [LARGE SCALE GENOMIC DNA]</scope>
    <source>
        <strain>ATCC 204508 / S288c</strain>
    </source>
</reference>
<reference key="4">
    <citation type="journal article" date="2014" name="G3 (Bethesda)">
        <title>The reference genome sequence of Saccharomyces cerevisiae: Then and now.</title>
        <authorList>
            <person name="Engel S.R."/>
            <person name="Dietrich F.S."/>
            <person name="Fisk D.G."/>
            <person name="Binkley G."/>
            <person name="Balakrishnan R."/>
            <person name="Costanzo M.C."/>
            <person name="Dwight S.S."/>
            <person name="Hitz B.C."/>
            <person name="Karra K."/>
            <person name="Nash R.S."/>
            <person name="Weng S."/>
            <person name="Wong E.D."/>
            <person name="Lloyd P."/>
            <person name="Skrzypek M.S."/>
            <person name="Miyasato S.R."/>
            <person name="Simison M."/>
            <person name="Cherry J.M."/>
        </authorList>
    </citation>
    <scope>GENOME REANNOTATION</scope>
    <source>
        <strain>ATCC 204508 / S288c</strain>
    </source>
</reference>
<gene>
    <name type="primary">HOP1</name>
    <name type="ordered locus">YIL072W</name>
</gene>
<name>HOP1_YEAST</name>
<dbReference type="EMBL" id="J04877">
    <property type="protein sequence ID" value="AAA34682.1"/>
    <property type="molecule type" value="Genomic_DNA"/>
</dbReference>
<dbReference type="EMBL" id="Z38060">
    <property type="protein sequence ID" value="CAA86151.1"/>
    <property type="molecule type" value="Genomic_DNA"/>
</dbReference>
<dbReference type="EMBL" id="Z37997">
    <property type="protein sequence ID" value="CAA86098.1"/>
    <property type="molecule type" value="Genomic_DNA"/>
</dbReference>
<dbReference type="EMBL" id="BK006942">
    <property type="protein sequence ID" value="DAA08478.1"/>
    <property type="molecule type" value="Genomic_DNA"/>
</dbReference>
<dbReference type="PIR" id="A34691">
    <property type="entry name" value="A34691"/>
</dbReference>
<dbReference type="RefSeq" id="NP_012193.3">
    <property type="nucleotide sequence ID" value="NM_001179422.3"/>
</dbReference>
<dbReference type="PDB" id="5YYZ">
    <property type="method" value="X-ray"/>
    <property type="resolution" value="1.80 A"/>
    <property type="chains" value="B=312-324"/>
</dbReference>
<dbReference type="PDB" id="8CWW">
    <property type="method" value="EM"/>
    <property type="resolution" value="2.74 A"/>
    <property type="chains" value="P=321-531"/>
</dbReference>
<dbReference type="PDBsum" id="5YYZ"/>
<dbReference type="PDBsum" id="8CWW"/>
<dbReference type="EMDB" id="EMD-27030"/>
<dbReference type="SMR" id="P20050"/>
<dbReference type="BioGRID" id="34920">
    <property type="interactions" value="76"/>
</dbReference>
<dbReference type="ComplexPortal" id="CPX-1387">
    <property type="entry name" value="Synaptonemal complex"/>
</dbReference>
<dbReference type="DIP" id="DIP-2371N"/>
<dbReference type="FunCoup" id="P20050">
    <property type="interactions" value="177"/>
</dbReference>
<dbReference type="IntAct" id="P20050">
    <property type="interactions" value="1"/>
</dbReference>
<dbReference type="MINT" id="P20050"/>
<dbReference type="STRING" id="4932.YIL072W"/>
<dbReference type="iPTMnet" id="P20050"/>
<dbReference type="PaxDb" id="4932-YIL072W"/>
<dbReference type="PeptideAtlas" id="P20050"/>
<dbReference type="EnsemblFungi" id="YIL072W_mRNA">
    <property type="protein sequence ID" value="YIL072W"/>
    <property type="gene ID" value="YIL072W"/>
</dbReference>
<dbReference type="GeneID" id="854738"/>
<dbReference type="KEGG" id="sce:YIL072W"/>
<dbReference type="AGR" id="SGD:S000001334"/>
<dbReference type="SGD" id="S000001334">
    <property type="gene designation" value="HOP1"/>
</dbReference>
<dbReference type="VEuPathDB" id="FungiDB:YIL072W"/>
<dbReference type="eggNOG" id="KOG4652">
    <property type="taxonomic scope" value="Eukaryota"/>
</dbReference>
<dbReference type="GeneTree" id="ENSGT00390000018130"/>
<dbReference type="HOGENOM" id="CLU_033649_0_0_1"/>
<dbReference type="InParanoid" id="P20050"/>
<dbReference type="OMA" id="MRLMFNE"/>
<dbReference type="OrthoDB" id="1928087at2759"/>
<dbReference type="BioCyc" id="YEAST:G3O-31339-MONOMER"/>
<dbReference type="BioGRID-ORCS" id="854738">
    <property type="hits" value="4 hits in 10 CRISPR screens"/>
</dbReference>
<dbReference type="PRO" id="PR:P20050"/>
<dbReference type="Proteomes" id="UP000002311">
    <property type="component" value="Chromosome IX"/>
</dbReference>
<dbReference type="RNAct" id="P20050">
    <property type="molecule type" value="protein"/>
</dbReference>
<dbReference type="GO" id="GO:0000794">
    <property type="term" value="C:condensed nuclear chromosome"/>
    <property type="evidence" value="ECO:0000314"/>
    <property type="project" value="SGD"/>
</dbReference>
<dbReference type="GO" id="GO:0000800">
    <property type="term" value="C:lateral element"/>
    <property type="evidence" value="ECO:0000353"/>
    <property type="project" value="SGD"/>
</dbReference>
<dbReference type="GO" id="GO:0005634">
    <property type="term" value="C:nucleus"/>
    <property type="evidence" value="ECO:0000314"/>
    <property type="project" value="SGD"/>
</dbReference>
<dbReference type="GO" id="GO:0000795">
    <property type="term" value="C:synaptonemal complex"/>
    <property type="evidence" value="ECO:0000303"/>
    <property type="project" value="ComplexPortal"/>
</dbReference>
<dbReference type="GO" id="GO:0003682">
    <property type="term" value="F:chromatin binding"/>
    <property type="evidence" value="ECO:0000314"/>
    <property type="project" value="SGD"/>
</dbReference>
<dbReference type="GO" id="GO:0000400">
    <property type="term" value="F:four-way junction DNA binding"/>
    <property type="evidence" value="ECO:0000314"/>
    <property type="project" value="SGD"/>
</dbReference>
<dbReference type="GO" id="GO:0008270">
    <property type="term" value="F:zinc ion binding"/>
    <property type="evidence" value="ECO:0007669"/>
    <property type="project" value="UniProtKB-KW"/>
</dbReference>
<dbReference type="GO" id="GO:0010846">
    <property type="term" value="P:activation of reciprocal meiotic recombination"/>
    <property type="evidence" value="ECO:0000315"/>
    <property type="project" value="SGD"/>
</dbReference>
<dbReference type="GO" id="GO:0007129">
    <property type="term" value="P:homologous chromosome pairing at meiosis"/>
    <property type="evidence" value="ECO:0000315"/>
    <property type="project" value="SGD"/>
</dbReference>
<dbReference type="GO" id="GO:0035825">
    <property type="term" value="P:homologous recombination"/>
    <property type="evidence" value="ECO:0000303"/>
    <property type="project" value="ComplexPortal"/>
</dbReference>
<dbReference type="GO" id="GO:0051598">
    <property type="term" value="P:meiotic recombination checkpoint signaling"/>
    <property type="evidence" value="ECO:0000316"/>
    <property type="project" value="SGD"/>
</dbReference>
<dbReference type="GO" id="GO:0007131">
    <property type="term" value="P:reciprocal meiotic recombination"/>
    <property type="evidence" value="ECO:0000303"/>
    <property type="project" value="ComplexPortal"/>
</dbReference>
<dbReference type="GO" id="GO:0007130">
    <property type="term" value="P:synaptonemal complex assembly"/>
    <property type="evidence" value="ECO:0000315"/>
    <property type="project" value="SGD"/>
</dbReference>
<dbReference type="FunFam" id="3.30.900.10:FF:000012">
    <property type="entry name" value="Hop1p"/>
    <property type="match status" value="1"/>
</dbReference>
<dbReference type="Gene3D" id="3.30.900.10">
    <property type="entry name" value="HORMA domain"/>
    <property type="match status" value="1"/>
</dbReference>
<dbReference type="InterPro" id="IPR016573">
    <property type="entry name" value="Hop1"/>
</dbReference>
<dbReference type="InterPro" id="IPR003511">
    <property type="entry name" value="HORMA_dom"/>
</dbReference>
<dbReference type="InterPro" id="IPR036570">
    <property type="entry name" value="HORMA_dom_sf"/>
</dbReference>
<dbReference type="InterPro" id="IPR051294">
    <property type="entry name" value="HORMA_MeioticProgression"/>
</dbReference>
<dbReference type="PANTHER" id="PTHR48225">
    <property type="entry name" value="HORMA DOMAIN-CONTAINING PROTEIN 1"/>
    <property type="match status" value="1"/>
</dbReference>
<dbReference type="PANTHER" id="PTHR48225:SF7">
    <property type="entry name" value="MEIOSIS-SPECIFIC PROTEIN HOP1"/>
    <property type="match status" value="1"/>
</dbReference>
<dbReference type="Pfam" id="PF02301">
    <property type="entry name" value="HORMA"/>
    <property type="match status" value="1"/>
</dbReference>
<dbReference type="PIRSF" id="PIRSF010751">
    <property type="entry name" value="HOP1_fungi"/>
    <property type="match status" value="1"/>
</dbReference>
<dbReference type="SUPFAM" id="SSF56019">
    <property type="entry name" value="The spindle assembly checkpoint protein mad2"/>
    <property type="match status" value="1"/>
</dbReference>
<dbReference type="PROSITE" id="PS50815">
    <property type="entry name" value="HORMA"/>
    <property type="match status" value="1"/>
</dbReference>
<accession>P20050</accession>
<accession>D6VVL2</accession>
<feature type="chain" id="PRO_0000126123" description="Meiosis-specific protein HOP1">
    <location>
        <begin position="1"/>
        <end position="605"/>
    </location>
</feature>
<feature type="domain" description="HORMA" evidence="1">
    <location>
        <begin position="20"/>
        <end position="250"/>
    </location>
</feature>
<feature type="zinc finger region">
    <location>
        <begin position="348"/>
        <end position="364"/>
    </location>
</feature>
<feature type="sequence variant" description="In allele HOP1-628; TS.">
    <original>S</original>
    <variation>N</variation>
    <location>
        <position position="595"/>
    </location>
</feature>
<feature type="turn" evidence="2">
    <location>
        <begin position="340"/>
        <end position="342"/>
    </location>
</feature>
<feature type="strand" evidence="2">
    <location>
        <begin position="345"/>
        <end position="348"/>
    </location>
</feature>
<feature type="turn" evidence="2">
    <location>
        <begin position="349"/>
        <end position="351"/>
    </location>
</feature>
<feature type="strand" evidence="2">
    <location>
        <begin position="354"/>
        <end position="357"/>
    </location>
</feature>
<feature type="helix" evidence="2">
    <location>
        <begin position="358"/>
        <end position="360"/>
    </location>
</feature>
<feature type="strand" evidence="2">
    <location>
        <begin position="364"/>
        <end position="369"/>
    </location>
</feature>
<feature type="helix" evidence="2">
    <location>
        <begin position="372"/>
        <end position="376"/>
    </location>
</feature>
<feature type="helix" evidence="2">
    <location>
        <begin position="385"/>
        <end position="403"/>
    </location>
</feature>
<feature type="helix" evidence="2">
    <location>
        <begin position="411"/>
        <end position="418"/>
    </location>
</feature>
<feature type="helix" evidence="2">
    <location>
        <begin position="426"/>
        <end position="441"/>
    </location>
</feature>
<feature type="strand" evidence="2">
    <location>
        <begin position="444"/>
        <end position="447"/>
    </location>
</feature>
<feature type="strand" evidence="2">
    <location>
        <begin position="449"/>
        <end position="451"/>
    </location>
</feature>
<feature type="strand" evidence="2">
    <location>
        <begin position="455"/>
        <end position="457"/>
    </location>
</feature>
<feature type="strand" evidence="2">
    <location>
        <begin position="460"/>
        <end position="466"/>
    </location>
</feature>
<feature type="turn" evidence="2">
    <location>
        <begin position="474"/>
        <end position="477"/>
    </location>
</feature>
<feature type="strand" evidence="2">
    <location>
        <begin position="482"/>
        <end position="490"/>
    </location>
</feature>
<feature type="helix" evidence="2">
    <location>
        <begin position="499"/>
        <end position="501"/>
    </location>
</feature>
<feature type="strand" evidence="2">
    <location>
        <begin position="503"/>
        <end position="505"/>
    </location>
</feature>
<feature type="helix" evidence="2">
    <location>
        <begin position="509"/>
        <end position="530"/>
    </location>
</feature>
<keyword id="KW-0002">3D-structure</keyword>
<keyword id="KW-0158">Chromosome</keyword>
<keyword id="KW-0238">DNA-binding</keyword>
<keyword id="KW-0469">Meiosis</keyword>
<keyword id="KW-0479">Metal-binding</keyword>
<keyword id="KW-0539">Nucleus</keyword>
<keyword id="KW-1185">Reference proteome</keyword>
<keyword id="KW-0862">Zinc</keyword>
<keyword id="KW-0863">Zinc-finger</keyword>